<gene>
    <name evidence="1" type="primary">luxS</name>
    <name type="ordered locus">USA300HOU_2123</name>
</gene>
<reference key="1">
    <citation type="journal article" date="2007" name="BMC Microbiol.">
        <title>Subtle genetic changes enhance virulence of methicillin resistant and sensitive Staphylococcus aureus.</title>
        <authorList>
            <person name="Highlander S.K."/>
            <person name="Hulten K.G."/>
            <person name="Qin X."/>
            <person name="Jiang H."/>
            <person name="Yerrapragada S."/>
            <person name="Mason E.O. Jr."/>
            <person name="Shang Y."/>
            <person name="Williams T.M."/>
            <person name="Fortunov R.M."/>
            <person name="Liu Y."/>
            <person name="Igboeli O."/>
            <person name="Petrosino J."/>
            <person name="Tirumalai M."/>
            <person name="Uzman A."/>
            <person name="Fox G.E."/>
            <person name="Cardenas A.M."/>
            <person name="Muzny D.M."/>
            <person name="Hemphill L."/>
            <person name="Ding Y."/>
            <person name="Dugan S."/>
            <person name="Blyth P.R."/>
            <person name="Buhay C.J."/>
            <person name="Dinh H.H."/>
            <person name="Hawes A.C."/>
            <person name="Holder M."/>
            <person name="Kovar C.L."/>
            <person name="Lee S.L."/>
            <person name="Liu W."/>
            <person name="Nazareth L.V."/>
            <person name="Wang Q."/>
            <person name="Zhou J."/>
            <person name="Kaplan S.L."/>
            <person name="Weinstock G.M."/>
        </authorList>
    </citation>
    <scope>NUCLEOTIDE SEQUENCE [LARGE SCALE GENOMIC DNA]</scope>
    <source>
        <strain>USA300 / TCH1516</strain>
    </source>
</reference>
<name>LUXS_STAAT</name>
<proteinExistence type="inferred from homology"/>
<comment type="function">
    <text evidence="1">Involved in the synthesis of autoinducer 2 (AI-2) which is secreted by bacteria and is used to communicate both the cell density and the metabolic potential of the environment. The regulation of gene expression in response to changes in cell density is called quorum sensing. Catalyzes the transformation of S-ribosylhomocysteine (RHC) to homocysteine (HC) and 4,5-dihydroxy-2,3-pentadione (DPD).</text>
</comment>
<comment type="catalytic activity">
    <reaction evidence="1">
        <text>S-(5-deoxy-D-ribos-5-yl)-L-homocysteine = (S)-4,5-dihydroxypentane-2,3-dione + L-homocysteine</text>
        <dbReference type="Rhea" id="RHEA:17753"/>
        <dbReference type="ChEBI" id="CHEBI:29484"/>
        <dbReference type="ChEBI" id="CHEBI:58195"/>
        <dbReference type="ChEBI" id="CHEBI:58199"/>
        <dbReference type="EC" id="4.4.1.21"/>
    </reaction>
</comment>
<comment type="cofactor">
    <cofactor evidence="1">
        <name>Fe cation</name>
        <dbReference type="ChEBI" id="CHEBI:24875"/>
    </cofactor>
    <text evidence="1">Binds 1 Fe cation per subunit.</text>
</comment>
<comment type="subunit">
    <text evidence="1">Homodimer.</text>
</comment>
<comment type="similarity">
    <text evidence="1">Belongs to the LuxS family.</text>
</comment>
<dbReference type="EC" id="4.4.1.21" evidence="1"/>
<dbReference type="EMBL" id="CP000730">
    <property type="protein sequence ID" value="ABX30120.1"/>
    <property type="molecule type" value="Genomic_DNA"/>
</dbReference>
<dbReference type="RefSeq" id="WP_000164421.1">
    <property type="nucleotide sequence ID" value="NC_010079.1"/>
</dbReference>
<dbReference type="SMR" id="A8YYA0"/>
<dbReference type="KEGG" id="sax:USA300HOU_2123"/>
<dbReference type="HOGENOM" id="CLU_107531_2_0_9"/>
<dbReference type="GO" id="GO:0005506">
    <property type="term" value="F:iron ion binding"/>
    <property type="evidence" value="ECO:0007669"/>
    <property type="project" value="InterPro"/>
</dbReference>
<dbReference type="GO" id="GO:0043768">
    <property type="term" value="F:S-ribosylhomocysteine lyase activity"/>
    <property type="evidence" value="ECO:0007669"/>
    <property type="project" value="UniProtKB-UniRule"/>
</dbReference>
<dbReference type="GO" id="GO:0009372">
    <property type="term" value="P:quorum sensing"/>
    <property type="evidence" value="ECO:0007669"/>
    <property type="project" value="UniProtKB-UniRule"/>
</dbReference>
<dbReference type="Gene3D" id="3.30.1360.80">
    <property type="entry name" value="S-ribosylhomocysteinase (LuxS)"/>
    <property type="match status" value="1"/>
</dbReference>
<dbReference type="HAMAP" id="MF_00091">
    <property type="entry name" value="LuxS"/>
    <property type="match status" value="1"/>
</dbReference>
<dbReference type="InterPro" id="IPR037005">
    <property type="entry name" value="LuxS_sf"/>
</dbReference>
<dbReference type="InterPro" id="IPR011249">
    <property type="entry name" value="Metalloenz_LuxS/M16"/>
</dbReference>
<dbReference type="InterPro" id="IPR003815">
    <property type="entry name" value="S-ribosylhomocysteinase"/>
</dbReference>
<dbReference type="NCBIfam" id="NF002604">
    <property type="entry name" value="PRK02260.1-4"/>
    <property type="match status" value="1"/>
</dbReference>
<dbReference type="PANTHER" id="PTHR35799">
    <property type="entry name" value="S-RIBOSYLHOMOCYSTEINE LYASE"/>
    <property type="match status" value="1"/>
</dbReference>
<dbReference type="PANTHER" id="PTHR35799:SF1">
    <property type="entry name" value="S-RIBOSYLHOMOCYSTEINE LYASE"/>
    <property type="match status" value="1"/>
</dbReference>
<dbReference type="Pfam" id="PF02664">
    <property type="entry name" value="LuxS"/>
    <property type="match status" value="1"/>
</dbReference>
<dbReference type="PIRSF" id="PIRSF006160">
    <property type="entry name" value="AI2"/>
    <property type="match status" value="1"/>
</dbReference>
<dbReference type="PRINTS" id="PR01487">
    <property type="entry name" value="LUXSPROTEIN"/>
</dbReference>
<dbReference type="SUPFAM" id="SSF63411">
    <property type="entry name" value="LuxS/MPP-like metallohydrolase"/>
    <property type="match status" value="1"/>
</dbReference>
<sequence length="156" mass="17514">MTKMNVESFNLDHTKVVAPFIRLAGTMEGLNGDVIHKYDIRFKQPNKEHMDMPGLHSLEHLMAENIRNHSDKVVDLSPMGCQTGFYVSFINHDNYDDVLNIVEATLNDVLNATEVPACNEVQCGWAASHSLEGAKTIAQAFLDKRNEWHDVFGTGK</sequence>
<protein>
    <recommendedName>
        <fullName evidence="1">S-ribosylhomocysteine lyase</fullName>
        <ecNumber evidence="1">4.4.1.21</ecNumber>
    </recommendedName>
    <alternativeName>
        <fullName evidence="1">AI-2 synthesis protein</fullName>
    </alternativeName>
    <alternativeName>
        <fullName evidence="1">Autoinducer-2 production protein LuxS</fullName>
    </alternativeName>
</protein>
<organism>
    <name type="scientific">Staphylococcus aureus (strain USA300 / TCH1516)</name>
    <dbReference type="NCBI Taxonomy" id="451516"/>
    <lineage>
        <taxon>Bacteria</taxon>
        <taxon>Bacillati</taxon>
        <taxon>Bacillota</taxon>
        <taxon>Bacilli</taxon>
        <taxon>Bacillales</taxon>
        <taxon>Staphylococcaceae</taxon>
        <taxon>Staphylococcus</taxon>
    </lineage>
</organism>
<keyword id="KW-0071">Autoinducer synthesis</keyword>
<keyword id="KW-0408">Iron</keyword>
<keyword id="KW-0456">Lyase</keyword>
<keyword id="KW-0479">Metal-binding</keyword>
<keyword id="KW-0673">Quorum sensing</keyword>
<accession>A8YYA0</accession>
<feature type="chain" id="PRO_1000075464" description="S-ribosylhomocysteine lyase">
    <location>
        <begin position="1"/>
        <end position="156"/>
    </location>
</feature>
<feature type="binding site" evidence="1">
    <location>
        <position position="56"/>
    </location>
    <ligand>
        <name>Fe cation</name>
        <dbReference type="ChEBI" id="CHEBI:24875"/>
    </ligand>
</feature>
<feature type="binding site" evidence="1">
    <location>
        <position position="60"/>
    </location>
    <ligand>
        <name>Fe cation</name>
        <dbReference type="ChEBI" id="CHEBI:24875"/>
    </ligand>
</feature>
<feature type="binding site" evidence="1">
    <location>
        <position position="123"/>
    </location>
    <ligand>
        <name>Fe cation</name>
        <dbReference type="ChEBI" id="CHEBI:24875"/>
    </ligand>
</feature>
<evidence type="ECO:0000255" key="1">
    <source>
        <dbReference type="HAMAP-Rule" id="MF_00091"/>
    </source>
</evidence>